<reference key="1">
    <citation type="journal article" date="1996" name="DNA Res.">
        <title>Sequence analysis of the genome of the unicellular cyanobacterium Synechocystis sp. strain PCC6803. II. Sequence determination of the entire genome and assignment of potential protein-coding regions.</title>
        <authorList>
            <person name="Kaneko T."/>
            <person name="Sato S."/>
            <person name="Kotani H."/>
            <person name="Tanaka A."/>
            <person name="Asamizu E."/>
            <person name="Nakamura Y."/>
            <person name="Miyajima N."/>
            <person name="Hirosawa M."/>
            <person name="Sugiura M."/>
            <person name="Sasamoto S."/>
            <person name="Kimura T."/>
            <person name="Hosouchi T."/>
            <person name="Matsuno A."/>
            <person name="Muraki A."/>
            <person name="Nakazaki N."/>
            <person name="Naruo K."/>
            <person name="Okumura S."/>
            <person name="Shimpo S."/>
            <person name="Takeuchi C."/>
            <person name="Wada T."/>
            <person name="Watanabe A."/>
            <person name="Yamada M."/>
            <person name="Yasuda M."/>
            <person name="Tabata S."/>
        </authorList>
    </citation>
    <scope>NUCLEOTIDE SEQUENCE [LARGE SCALE GENOMIC DNA]</scope>
    <source>
        <strain>ATCC 27184 / PCC 6803 / Kazusa</strain>
    </source>
</reference>
<comment type="function">
    <text evidence="1">Catalyzes the acyloin condensation reaction between C atoms 2 and 3 of pyruvate and glyceraldehyde 3-phosphate to yield 1-deoxy-D-xylulose-5-phosphate (DXP).</text>
</comment>
<comment type="catalytic activity">
    <reaction evidence="1">
        <text>D-glyceraldehyde 3-phosphate + pyruvate + H(+) = 1-deoxy-D-xylulose 5-phosphate + CO2</text>
        <dbReference type="Rhea" id="RHEA:12605"/>
        <dbReference type="ChEBI" id="CHEBI:15361"/>
        <dbReference type="ChEBI" id="CHEBI:15378"/>
        <dbReference type="ChEBI" id="CHEBI:16526"/>
        <dbReference type="ChEBI" id="CHEBI:57792"/>
        <dbReference type="ChEBI" id="CHEBI:59776"/>
        <dbReference type="EC" id="2.2.1.7"/>
    </reaction>
</comment>
<comment type="cofactor">
    <cofactor evidence="1">
        <name>Mg(2+)</name>
        <dbReference type="ChEBI" id="CHEBI:18420"/>
    </cofactor>
    <text evidence="1">Binds 1 Mg(2+) ion per subunit.</text>
</comment>
<comment type="cofactor">
    <cofactor evidence="1">
        <name>thiamine diphosphate</name>
        <dbReference type="ChEBI" id="CHEBI:58937"/>
    </cofactor>
    <text evidence="1">Binds 1 thiamine pyrophosphate per subunit.</text>
</comment>
<comment type="pathway">
    <text evidence="1">Metabolic intermediate biosynthesis; 1-deoxy-D-xylulose 5-phosphate biosynthesis; 1-deoxy-D-xylulose 5-phosphate from D-glyceraldehyde 3-phosphate and pyruvate: step 1/1.</text>
</comment>
<comment type="subunit">
    <text evidence="1">Homodimer.</text>
</comment>
<comment type="similarity">
    <text evidence="1">Belongs to the transketolase family. DXPS subfamily.</text>
</comment>
<accession>P73067</accession>
<gene>
    <name evidence="1" type="primary">dxs</name>
    <name type="ordered locus">sll1945</name>
</gene>
<evidence type="ECO:0000255" key="1">
    <source>
        <dbReference type="HAMAP-Rule" id="MF_00315"/>
    </source>
</evidence>
<feature type="chain" id="PRO_0000189163" description="1-deoxy-D-xylulose-5-phosphate synthase">
    <location>
        <begin position="1"/>
        <end position="640"/>
    </location>
</feature>
<feature type="binding site" evidence="1">
    <location>
        <position position="72"/>
    </location>
    <ligand>
        <name>thiamine diphosphate</name>
        <dbReference type="ChEBI" id="CHEBI:58937"/>
    </ligand>
</feature>
<feature type="binding site" evidence="1">
    <location>
        <begin position="113"/>
        <end position="115"/>
    </location>
    <ligand>
        <name>thiamine diphosphate</name>
        <dbReference type="ChEBI" id="CHEBI:58937"/>
    </ligand>
</feature>
<feature type="binding site" evidence="1">
    <location>
        <position position="144"/>
    </location>
    <ligand>
        <name>Mg(2+)</name>
        <dbReference type="ChEBI" id="CHEBI:18420"/>
    </ligand>
</feature>
<feature type="binding site" evidence="1">
    <location>
        <begin position="145"/>
        <end position="146"/>
    </location>
    <ligand>
        <name>thiamine diphosphate</name>
        <dbReference type="ChEBI" id="CHEBI:58937"/>
    </ligand>
</feature>
<feature type="binding site" evidence="1">
    <location>
        <position position="174"/>
    </location>
    <ligand>
        <name>Mg(2+)</name>
        <dbReference type="ChEBI" id="CHEBI:18420"/>
    </ligand>
</feature>
<feature type="binding site" evidence="1">
    <location>
        <position position="174"/>
    </location>
    <ligand>
        <name>thiamine diphosphate</name>
        <dbReference type="ChEBI" id="CHEBI:58937"/>
    </ligand>
</feature>
<feature type="binding site" evidence="1">
    <location>
        <position position="287"/>
    </location>
    <ligand>
        <name>thiamine diphosphate</name>
        <dbReference type="ChEBI" id="CHEBI:58937"/>
    </ligand>
</feature>
<feature type="binding site" evidence="1">
    <location>
        <position position="370"/>
    </location>
    <ligand>
        <name>thiamine diphosphate</name>
        <dbReference type="ChEBI" id="CHEBI:58937"/>
    </ligand>
</feature>
<proteinExistence type="inferred from homology"/>
<sequence length="640" mass="69328">MHISELTHPNELKGLSIRELEEVSRQIREKHLQTVATSGGHLGPGLGVVELTVALYSTLDLDKDRVIWDVGHQAYPHKMLTGRYHDFHTLRQKDGVAGYLKRSESRFDHFGAGHASTSISAGLGMALARDAKGEDFKVVSIIGDGALTGGMALEAINHAGHLPHTRLMVILNDNEMSISPNVGAISRYLNKVRLSSPMQFLTDNLEEQIKHLPFVGDSLTPEMERVKEGMKRLVVPKVGAVIEELGFKYFGPIDGHSLQELIDTFKQAEKVPGPVFVHVSTTKGKGYDLAEKDQVGYHAQSPFNLSTGKAYPSSKPKPPSYSKVFAHTLTTLAKENPNIVGITAAMATGTGLDKLQAKLPKQYVDVGIAEQHAVTLAAGMACEGIRPVVAIYSTFLQRGYDQIIHDVCIQKLPVFFCLDRAGIVGADGPTHQGMYDIAYLRCIPNLVLMAPKDEAELQQMLVTGVNYTGGAIAMRYPRGNGIGVPLMEEGWEPLEIGKAEILRSGDDVLLLGYGSMVYPALQTAELLHEHGIEATVVNARFVKPLDTELILPLAERIGKVVTMEEGCLMGGFGSAVAEALMDNNVLVPLKRLGVPDILVDHATPEQSTVDLGLTPAQMAQNIMASLFKTETESVVAPGVS</sequence>
<keyword id="KW-0414">Isoprene biosynthesis</keyword>
<keyword id="KW-0460">Magnesium</keyword>
<keyword id="KW-0479">Metal-binding</keyword>
<keyword id="KW-1185">Reference proteome</keyword>
<keyword id="KW-0784">Thiamine biosynthesis</keyword>
<keyword id="KW-0786">Thiamine pyrophosphate</keyword>
<keyword id="KW-0808">Transferase</keyword>
<organism>
    <name type="scientific">Synechocystis sp. (strain ATCC 27184 / PCC 6803 / Kazusa)</name>
    <dbReference type="NCBI Taxonomy" id="1111708"/>
    <lineage>
        <taxon>Bacteria</taxon>
        <taxon>Bacillati</taxon>
        <taxon>Cyanobacteriota</taxon>
        <taxon>Cyanophyceae</taxon>
        <taxon>Synechococcales</taxon>
        <taxon>Merismopediaceae</taxon>
        <taxon>Synechocystis</taxon>
    </lineage>
</organism>
<protein>
    <recommendedName>
        <fullName evidence="1">1-deoxy-D-xylulose-5-phosphate synthase</fullName>
        <ecNumber evidence="1">2.2.1.7</ecNumber>
    </recommendedName>
    <alternativeName>
        <fullName evidence="1">1-deoxyxylulose-5-phosphate synthase</fullName>
        <shortName evidence="1">DXP synthase</shortName>
        <shortName evidence="1">DXPS</shortName>
    </alternativeName>
</protein>
<dbReference type="EC" id="2.2.1.7" evidence="1"/>
<dbReference type="EMBL" id="BA000022">
    <property type="protein sequence ID" value="BAA17089.1"/>
    <property type="molecule type" value="Genomic_DNA"/>
</dbReference>
<dbReference type="PIR" id="S75175">
    <property type="entry name" value="S75175"/>
</dbReference>
<dbReference type="SMR" id="P73067"/>
<dbReference type="FunCoup" id="P73067">
    <property type="interactions" value="372"/>
</dbReference>
<dbReference type="IntAct" id="P73067">
    <property type="interactions" value="3"/>
</dbReference>
<dbReference type="STRING" id="1148.gene:10497950"/>
<dbReference type="PaxDb" id="1148-1652165"/>
<dbReference type="EnsemblBacteria" id="BAA17089">
    <property type="protein sequence ID" value="BAA17089"/>
    <property type="gene ID" value="BAA17089"/>
</dbReference>
<dbReference type="KEGG" id="syn:sll1945"/>
<dbReference type="eggNOG" id="COG1154">
    <property type="taxonomic scope" value="Bacteria"/>
</dbReference>
<dbReference type="InParanoid" id="P73067"/>
<dbReference type="PhylomeDB" id="P73067"/>
<dbReference type="BRENDA" id="2.2.1.7">
    <property type="organism ID" value="382"/>
</dbReference>
<dbReference type="UniPathway" id="UPA00064">
    <property type="reaction ID" value="UER00091"/>
</dbReference>
<dbReference type="Proteomes" id="UP000001425">
    <property type="component" value="Chromosome"/>
</dbReference>
<dbReference type="GO" id="GO:0005829">
    <property type="term" value="C:cytosol"/>
    <property type="evidence" value="ECO:0000318"/>
    <property type="project" value="GO_Central"/>
</dbReference>
<dbReference type="GO" id="GO:0008661">
    <property type="term" value="F:1-deoxy-D-xylulose-5-phosphate synthase activity"/>
    <property type="evidence" value="ECO:0000318"/>
    <property type="project" value="GO_Central"/>
</dbReference>
<dbReference type="GO" id="GO:0000287">
    <property type="term" value="F:magnesium ion binding"/>
    <property type="evidence" value="ECO:0007669"/>
    <property type="project" value="UniProtKB-UniRule"/>
</dbReference>
<dbReference type="GO" id="GO:0030976">
    <property type="term" value="F:thiamine pyrophosphate binding"/>
    <property type="evidence" value="ECO:0007669"/>
    <property type="project" value="UniProtKB-UniRule"/>
</dbReference>
<dbReference type="GO" id="GO:0052865">
    <property type="term" value="P:1-deoxy-D-xylulose 5-phosphate biosynthetic process"/>
    <property type="evidence" value="ECO:0007669"/>
    <property type="project" value="UniProtKB-UniPathway"/>
</dbReference>
<dbReference type="GO" id="GO:0019288">
    <property type="term" value="P:isopentenyl diphosphate biosynthetic process, methylerythritol 4-phosphate pathway"/>
    <property type="evidence" value="ECO:0000318"/>
    <property type="project" value="GO_Central"/>
</dbReference>
<dbReference type="GO" id="GO:0016114">
    <property type="term" value="P:terpenoid biosynthetic process"/>
    <property type="evidence" value="ECO:0007669"/>
    <property type="project" value="UniProtKB-UniRule"/>
</dbReference>
<dbReference type="GO" id="GO:0009228">
    <property type="term" value="P:thiamine biosynthetic process"/>
    <property type="evidence" value="ECO:0007669"/>
    <property type="project" value="UniProtKB-UniRule"/>
</dbReference>
<dbReference type="CDD" id="cd02007">
    <property type="entry name" value="TPP_DXS"/>
    <property type="match status" value="1"/>
</dbReference>
<dbReference type="CDD" id="cd07033">
    <property type="entry name" value="TPP_PYR_DXS_TK_like"/>
    <property type="match status" value="1"/>
</dbReference>
<dbReference type="FunFam" id="3.40.50.920:FF:000002">
    <property type="entry name" value="1-deoxy-D-xylulose-5-phosphate synthase"/>
    <property type="match status" value="1"/>
</dbReference>
<dbReference type="FunFam" id="3.40.50.970:FF:000005">
    <property type="entry name" value="1-deoxy-D-xylulose-5-phosphate synthase"/>
    <property type="match status" value="1"/>
</dbReference>
<dbReference type="Gene3D" id="3.40.50.920">
    <property type="match status" value="1"/>
</dbReference>
<dbReference type="Gene3D" id="3.40.50.970">
    <property type="match status" value="2"/>
</dbReference>
<dbReference type="HAMAP" id="MF_00315">
    <property type="entry name" value="DXP_synth"/>
    <property type="match status" value="1"/>
</dbReference>
<dbReference type="InterPro" id="IPR005477">
    <property type="entry name" value="Dxylulose-5-P_synthase"/>
</dbReference>
<dbReference type="InterPro" id="IPR029061">
    <property type="entry name" value="THDP-binding"/>
</dbReference>
<dbReference type="InterPro" id="IPR009014">
    <property type="entry name" value="Transketo_C/PFOR_II"/>
</dbReference>
<dbReference type="InterPro" id="IPR005475">
    <property type="entry name" value="Transketolase-like_Pyr-bd"/>
</dbReference>
<dbReference type="InterPro" id="IPR020826">
    <property type="entry name" value="Transketolase_BS"/>
</dbReference>
<dbReference type="InterPro" id="IPR033248">
    <property type="entry name" value="Transketolase_C"/>
</dbReference>
<dbReference type="InterPro" id="IPR049557">
    <property type="entry name" value="Transketolase_CS"/>
</dbReference>
<dbReference type="NCBIfam" id="TIGR00204">
    <property type="entry name" value="dxs"/>
    <property type="match status" value="1"/>
</dbReference>
<dbReference type="NCBIfam" id="NF003933">
    <property type="entry name" value="PRK05444.2-2"/>
    <property type="match status" value="1"/>
</dbReference>
<dbReference type="PANTHER" id="PTHR43322">
    <property type="entry name" value="1-D-DEOXYXYLULOSE 5-PHOSPHATE SYNTHASE-RELATED"/>
    <property type="match status" value="1"/>
</dbReference>
<dbReference type="PANTHER" id="PTHR43322:SF5">
    <property type="entry name" value="1-DEOXY-D-XYLULOSE-5-PHOSPHATE SYNTHASE, CHLOROPLASTIC"/>
    <property type="match status" value="1"/>
</dbReference>
<dbReference type="Pfam" id="PF13292">
    <property type="entry name" value="DXP_synthase_N"/>
    <property type="match status" value="1"/>
</dbReference>
<dbReference type="Pfam" id="PF02779">
    <property type="entry name" value="Transket_pyr"/>
    <property type="match status" value="1"/>
</dbReference>
<dbReference type="Pfam" id="PF02780">
    <property type="entry name" value="Transketolase_C"/>
    <property type="match status" value="1"/>
</dbReference>
<dbReference type="SMART" id="SM00861">
    <property type="entry name" value="Transket_pyr"/>
    <property type="match status" value="1"/>
</dbReference>
<dbReference type="SUPFAM" id="SSF52518">
    <property type="entry name" value="Thiamin diphosphate-binding fold (THDP-binding)"/>
    <property type="match status" value="2"/>
</dbReference>
<dbReference type="SUPFAM" id="SSF52922">
    <property type="entry name" value="TK C-terminal domain-like"/>
    <property type="match status" value="1"/>
</dbReference>
<dbReference type="PROSITE" id="PS00801">
    <property type="entry name" value="TRANSKETOLASE_1"/>
    <property type="match status" value="1"/>
</dbReference>
<dbReference type="PROSITE" id="PS00802">
    <property type="entry name" value="TRANSKETOLASE_2"/>
    <property type="match status" value="1"/>
</dbReference>
<name>DXS_SYNY3</name>